<name>PETD_CHLVU</name>
<sequence>MAVTKKPDLSDPVLRAKLAKGMGHNYYGEPAWPNDLLYIFPVVIFGTFACVIGLSVLDPAAIGEPANPFATPLEILPEWYFYPVFQILRVVPNKLLGVLLMAAVPAGLLTVPFIENINKFQNPFRRPVATTVFLIGTVAAIWLGIGAALPIDISLTLGLF</sequence>
<evidence type="ECO:0000250" key="1"/>
<evidence type="ECO:0000255" key="2">
    <source>
        <dbReference type="HAMAP-Rule" id="MF_01344"/>
    </source>
</evidence>
<proteinExistence type="inferred from homology"/>
<feature type="chain" id="PRO_0000061853" description="Cytochrome b6-f complex subunit 4">
    <location>
        <begin position="1"/>
        <end position="160"/>
    </location>
</feature>
<feature type="transmembrane region" description="Helical" evidence="2">
    <location>
        <begin position="36"/>
        <end position="56"/>
    </location>
</feature>
<feature type="transmembrane region" description="Helical" evidence="2">
    <location>
        <begin position="95"/>
        <end position="115"/>
    </location>
</feature>
<feature type="transmembrane region" description="Helical" evidence="2">
    <location>
        <begin position="131"/>
        <end position="151"/>
    </location>
</feature>
<protein>
    <recommendedName>
        <fullName evidence="2">Cytochrome b6-f complex subunit 4</fullName>
    </recommendedName>
    <alternativeName>
        <fullName evidence="2">17 kDa polypeptide</fullName>
    </alternativeName>
</protein>
<gene>
    <name evidence="2" type="primary">petD</name>
</gene>
<accession>P56322</accession>
<keyword id="KW-0150">Chloroplast</keyword>
<keyword id="KW-0249">Electron transport</keyword>
<keyword id="KW-0472">Membrane</keyword>
<keyword id="KW-0602">Photosynthesis</keyword>
<keyword id="KW-0934">Plastid</keyword>
<keyword id="KW-0793">Thylakoid</keyword>
<keyword id="KW-0812">Transmembrane</keyword>
<keyword id="KW-1133">Transmembrane helix</keyword>
<keyword id="KW-0813">Transport</keyword>
<geneLocation type="chloroplast"/>
<organism>
    <name type="scientific">Chlorella vulgaris</name>
    <name type="common">Green alga</name>
    <dbReference type="NCBI Taxonomy" id="3077"/>
    <lineage>
        <taxon>Eukaryota</taxon>
        <taxon>Viridiplantae</taxon>
        <taxon>Chlorophyta</taxon>
        <taxon>core chlorophytes</taxon>
        <taxon>Trebouxiophyceae</taxon>
        <taxon>Chlorellales</taxon>
        <taxon>Chlorellaceae</taxon>
        <taxon>Chlorella clade</taxon>
        <taxon>Chlorella</taxon>
    </lineage>
</organism>
<dbReference type="EMBL" id="AB001684">
    <property type="protein sequence ID" value="BAA57912.1"/>
    <property type="molecule type" value="Genomic_DNA"/>
</dbReference>
<dbReference type="PIR" id="T07264">
    <property type="entry name" value="T07264"/>
</dbReference>
<dbReference type="RefSeq" id="NP_045836.1">
    <property type="nucleotide sequence ID" value="NC_001865.1"/>
</dbReference>
<dbReference type="SMR" id="P56322"/>
<dbReference type="GeneID" id="809132"/>
<dbReference type="OrthoDB" id="244at2759"/>
<dbReference type="GO" id="GO:0009535">
    <property type="term" value="C:chloroplast thylakoid membrane"/>
    <property type="evidence" value="ECO:0007669"/>
    <property type="project" value="UniProtKB-SubCell"/>
</dbReference>
<dbReference type="GO" id="GO:0005739">
    <property type="term" value="C:mitochondrion"/>
    <property type="evidence" value="ECO:0007669"/>
    <property type="project" value="GOC"/>
</dbReference>
<dbReference type="GO" id="GO:0045158">
    <property type="term" value="F:electron transporter, transferring electrons within cytochrome b6/f complex of photosystem II activity"/>
    <property type="evidence" value="ECO:0007669"/>
    <property type="project" value="UniProtKB-UniRule"/>
</dbReference>
<dbReference type="GO" id="GO:0045156">
    <property type="term" value="F:electron transporter, transferring electrons within the cyclic electron transport pathway of photosynthesis activity"/>
    <property type="evidence" value="ECO:0007669"/>
    <property type="project" value="InterPro"/>
</dbReference>
<dbReference type="GO" id="GO:0008121">
    <property type="term" value="F:ubiquinol-cytochrome-c reductase activity"/>
    <property type="evidence" value="ECO:0007669"/>
    <property type="project" value="TreeGrafter"/>
</dbReference>
<dbReference type="GO" id="GO:0006122">
    <property type="term" value="P:mitochondrial electron transport, ubiquinol to cytochrome c"/>
    <property type="evidence" value="ECO:0007669"/>
    <property type="project" value="TreeGrafter"/>
</dbReference>
<dbReference type="GO" id="GO:0009767">
    <property type="term" value="P:photosynthetic electron transport chain"/>
    <property type="evidence" value="ECO:0007669"/>
    <property type="project" value="InterPro"/>
</dbReference>
<dbReference type="CDD" id="cd00290">
    <property type="entry name" value="cytochrome_b_C"/>
    <property type="match status" value="1"/>
</dbReference>
<dbReference type="FunFam" id="1.10.287.980:FF:000001">
    <property type="entry name" value="Cytochrome b6-f complex subunit 4"/>
    <property type="match status" value="1"/>
</dbReference>
<dbReference type="FunFam" id="1.20.5.510:FF:000002">
    <property type="entry name" value="Cytochrome b6-f complex subunit 4"/>
    <property type="match status" value="1"/>
</dbReference>
<dbReference type="Gene3D" id="1.10.287.980">
    <property type="entry name" value="plastocyanin oxidoreductase"/>
    <property type="match status" value="1"/>
</dbReference>
<dbReference type="Gene3D" id="1.20.5.510">
    <property type="entry name" value="Single helix bin"/>
    <property type="match status" value="1"/>
</dbReference>
<dbReference type="HAMAP" id="MF_01344">
    <property type="entry name" value="Cytb6_f_subIV"/>
    <property type="match status" value="1"/>
</dbReference>
<dbReference type="InterPro" id="IPR005798">
    <property type="entry name" value="Cyt_b/b6_C"/>
</dbReference>
<dbReference type="InterPro" id="IPR036150">
    <property type="entry name" value="Cyt_b/b6_C_sf"/>
</dbReference>
<dbReference type="InterPro" id="IPR005870">
    <property type="entry name" value="Cyt_b6/f_cplx_suIV"/>
</dbReference>
<dbReference type="InterPro" id="IPR048260">
    <property type="entry name" value="Cytochrome_b_C_euk/bac"/>
</dbReference>
<dbReference type="NCBIfam" id="TIGR01156">
    <property type="entry name" value="cytb6_f_IV"/>
    <property type="match status" value="1"/>
</dbReference>
<dbReference type="PANTHER" id="PTHR19271">
    <property type="entry name" value="CYTOCHROME B"/>
    <property type="match status" value="1"/>
</dbReference>
<dbReference type="PANTHER" id="PTHR19271:SF41">
    <property type="entry name" value="CYTOCHROME B_B6 C-TERMINAL REGION PROFILE DOMAIN-CONTAINING PROTEIN"/>
    <property type="match status" value="1"/>
</dbReference>
<dbReference type="Pfam" id="PF00032">
    <property type="entry name" value="Cytochrom_B_C"/>
    <property type="match status" value="1"/>
</dbReference>
<dbReference type="PIRSF" id="PIRSF000033">
    <property type="entry name" value="B6f_17K"/>
    <property type="match status" value="1"/>
</dbReference>
<dbReference type="SUPFAM" id="SSF81648">
    <property type="entry name" value="a domain/subunit of cytochrome bc1 complex (Ubiquinol-cytochrome c reductase)"/>
    <property type="match status" value="1"/>
</dbReference>
<dbReference type="PROSITE" id="PS51003">
    <property type="entry name" value="CYTB_CTER"/>
    <property type="match status" value="1"/>
</dbReference>
<comment type="function">
    <text evidence="2">Component of the cytochrome b6-f complex, which mediates electron transfer between photosystem II (PSII) and photosystem I (PSI), cyclic electron flow around PSI, and state transitions.</text>
</comment>
<comment type="subunit">
    <text evidence="1">The 4 large subunits of the cytochrome b6-f complex are cytochrome b6, subunit IV (17 kDa polypeptide, petD), cytochrome f and the Rieske protein, while the 4 small subunits are petG, petL, petM and petN. The complex functions as a dimer (By similarity).</text>
</comment>
<comment type="subcellular location">
    <subcellularLocation>
        <location evidence="2">Plastid</location>
        <location evidence="2">Chloroplast thylakoid membrane</location>
        <topology evidence="2">Multi-pass membrane protein</topology>
    </subcellularLocation>
</comment>
<comment type="similarity">
    <text evidence="2">Belongs to the cytochrome b family. PetD subfamily.</text>
</comment>
<reference key="1">
    <citation type="journal article" date="1997" name="Proc. Natl. Acad. Sci. U.S.A.">
        <title>Complete nucleotide sequence of the chloroplast genome from the green alga Chlorella vulgaris: the existence of genes possibly involved in chloroplast division.</title>
        <authorList>
            <person name="Wakasugi T."/>
            <person name="Nagai T."/>
            <person name="Kapoor M."/>
            <person name="Sugita M."/>
            <person name="Ito M."/>
            <person name="Ito S."/>
            <person name="Tsudzuki J."/>
            <person name="Nakashima K."/>
            <person name="Tsudzuki T."/>
            <person name="Suzuki Y."/>
            <person name="Hamada A."/>
            <person name="Ohta T."/>
            <person name="Inamura A."/>
            <person name="Yoshinaga K."/>
            <person name="Sugiura M."/>
        </authorList>
    </citation>
    <scope>NUCLEOTIDE SEQUENCE [LARGE SCALE GENOMIC DNA]</scope>
    <source>
        <strain>IAM C-27 / Tamiya</strain>
    </source>
</reference>